<feature type="chain" id="PRO_0000332663" description="Ribonuclease H">
    <location>
        <begin position="1"/>
        <end position="151"/>
    </location>
</feature>
<feature type="domain" description="RNase H type-1" evidence="2">
    <location>
        <begin position="1"/>
        <end position="146"/>
    </location>
</feature>
<feature type="binding site" evidence="1">
    <location>
        <position position="9"/>
    </location>
    <ligand>
        <name>Mg(2+)</name>
        <dbReference type="ChEBI" id="CHEBI:18420"/>
        <label>1</label>
    </ligand>
</feature>
<feature type="binding site" evidence="1">
    <location>
        <position position="9"/>
    </location>
    <ligand>
        <name>Mg(2+)</name>
        <dbReference type="ChEBI" id="CHEBI:18420"/>
        <label>2</label>
    </ligand>
</feature>
<feature type="binding site" evidence="1">
    <location>
        <position position="52"/>
    </location>
    <ligand>
        <name>Mg(2+)</name>
        <dbReference type="ChEBI" id="CHEBI:18420"/>
        <label>1</label>
    </ligand>
</feature>
<feature type="binding site" evidence="1">
    <location>
        <position position="74"/>
    </location>
    <ligand>
        <name>Mg(2+)</name>
        <dbReference type="ChEBI" id="CHEBI:18420"/>
        <label>1</label>
    </ligand>
</feature>
<feature type="binding site" evidence="1">
    <location>
        <position position="138"/>
    </location>
    <ligand>
        <name>Mg(2+)</name>
        <dbReference type="ChEBI" id="CHEBI:18420"/>
        <label>2</label>
    </ligand>
</feature>
<evidence type="ECO:0000255" key="1">
    <source>
        <dbReference type="HAMAP-Rule" id="MF_00042"/>
    </source>
</evidence>
<evidence type="ECO:0000255" key="2">
    <source>
        <dbReference type="PROSITE-ProRule" id="PRU00408"/>
    </source>
</evidence>
<keyword id="KW-0963">Cytoplasm</keyword>
<keyword id="KW-0255">Endonuclease</keyword>
<keyword id="KW-0378">Hydrolase</keyword>
<keyword id="KW-0460">Magnesium</keyword>
<keyword id="KW-0479">Metal-binding</keyword>
<keyword id="KW-0540">Nuclease</keyword>
<organism>
    <name type="scientific">Cereibacter sphaeroides (strain ATCC 17025 / ATH 2.4.3)</name>
    <name type="common">Rhodobacter sphaeroides</name>
    <dbReference type="NCBI Taxonomy" id="349102"/>
    <lineage>
        <taxon>Bacteria</taxon>
        <taxon>Pseudomonadati</taxon>
        <taxon>Pseudomonadota</taxon>
        <taxon>Alphaproteobacteria</taxon>
        <taxon>Rhodobacterales</taxon>
        <taxon>Paracoccaceae</taxon>
        <taxon>Cereibacter</taxon>
    </lineage>
</organism>
<proteinExistence type="inferred from homology"/>
<name>RNH_CERS5</name>
<comment type="function">
    <text evidence="1">Endonuclease that specifically degrades the RNA of RNA-DNA hybrids.</text>
</comment>
<comment type="catalytic activity">
    <reaction evidence="1">
        <text>Endonucleolytic cleavage to 5'-phosphomonoester.</text>
        <dbReference type="EC" id="3.1.26.4"/>
    </reaction>
</comment>
<comment type="cofactor">
    <cofactor evidence="1">
        <name>Mg(2+)</name>
        <dbReference type="ChEBI" id="CHEBI:18420"/>
    </cofactor>
    <text evidence="1">Binds 1 Mg(2+) ion per subunit. May bind a second metal ion at a regulatory site, or after substrate binding.</text>
</comment>
<comment type="subunit">
    <text evidence="1">Monomer.</text>
</comment>
<comment type="subcellular location">
    <subcellularLocation>
        <location evidence="1">Cytoplasm</location>
    </subcellularLocation>
</comment>
<comment type="similarity">
    <text evidence="1">Belongs to the RNase H family.</text>
</comment>
<reference key="1">
    <citation type="submission" date="2007-04" db="EMBL/GenBank/DDBJ databases">
        <title>Complete sequence of chromosome of Rhodobacter sphaeroides ATCC 17025.</title>
        <authorList>
            <consortium name="US DOE Joint Genome Institute"/>
            <person name="Copeland A."/>
            <person name="Lucas S."/>
            <person name="Lapidus A."/>
            <person name="Barry K."/>
            <person name="Detter J.C."/>
            <person name="Glavina del Rio T."/>
            <person name="Hammon N."/>
            <person name="Israni S."/>
            <person name="Dalin E."/>
            <person name="Tice H."/>
            <person name="Pitluck S."/>
            <person name="Chertkov O."/>
            <person name="Brettin T."/>
            <person name="Bruce D."/>
            <person name="Han C."/>
            <person name="Schmutz J."/>
            <person name="Larimer F."/>
            <person name="Land M."/>
            <person name="Hauser L."/>
            <person name="Kyrpides N."/>
            <person name="Kim E."/>
            <person name="Richardson P."/>
            <person name="Mackenzie C."/>
            <person name="Choudhary M."/>
            <person name="Donohue T.J."/>
            <person name="Kaplan S."/>
        </authorList>
    </citation>
    <scope>NUCLEOTIDE SEQUENCE [LARGE SCALE GENOMIC DNA]</scope>
    <source>
        <strain>ATCC 17025 / ATH 2.4.3</strain>
    </source>
</reference>
<accession>A4WNV1</accession>
<sequence length="151" mass="16728">MSDLFAYTDGACSGNPGPGGWGVLMLAREGEAVVKERTLQGGEALTTNNRMELMAAISALEALTRPTEITIVTDSAYVKNGVTTWIHGWKRNGWKTADRKPVKNAELWERLDAAQQRHKVVWRWIKGHAGHAENERADELARAGMAPFKTR</sequence>
<protein>
    <recommendedName>
        <fullName evidence="1">Ribonuclease H</fullName>
        <shortName evidence="1">RNase H</shortName>
        <ecNumber evidence="1">3.1.26.4</ecNumber>
    </recommendedName>
</protein>
<dbReference type="EC" id="3.1.26.4" evidence="1"/>
<dbReference type="EMBL" id="CP000661">
    <property type="protein sequence ID" value="ABP69065.1"/>
    <property type="molecule type" value="Genomic_DNA"/>
</dbReference>
<dbReference type="SMR" id="A4WNV1"/>
<dbReference type="STRING" id="349102.Rsph17025_0154"/>
<dbReference type="KEGG" id="rsq:Rsph17025_0154"/>
<dbReference type="eggNOG" id="COG0328">
    <property type="taxonomic scope" value="Bacteria"/>
</dbReference>
<dbReference type="HOGENOM" id="CLU_030894_6_0_5"/>
<dbReference type="BioCyc" id="RSPH349102:G1G8M-155-MONOMER"/>
<dbReference type="GO" id="GO:0005737">
    <property type="term" value="C:cytoplasm"/>
    <property type="evidence" value="ECO:0007669"/>
    <property type="project" value="UniProtKB-SubCell"/>
</dbReference>
<dbReference type="GO" id="GO:0000287">
    <property type="term" value="F:magnesium ion binding"/>
    <property type="evidence" value="ECO:0007669"/>
    <property type="project" value="UniProtKB-UniRule"/>
</dbReference>
<dbReference type="GO" id="GO:0003676">
    <property type="term" value="F:nucleic acid binding"/>
    <property type="evidence" value="ECO:0007669"/>
    <property type="project" value="InterPro"/>
</dbReference>
<dbReference type="GO" id="GO:0004523">
    <property type="term" value="F:RNA-DNA hybrid ribonuclease activity"/>
    <property type="evidence" value="ECO:0007669"/>
    <property type="project" value="UniProtKB-UniRule"/>
</dbReference>
<dbReference type="GO" id="GO:0043137">
    <property type="term" value="P:DNA replication, removal of RNA primer"/>
    <property type="evidence" value="ECO:0007669"/>
    <property type="project" value="TreeGrafter"/>
</dbReference>
<dbReference type="CDD" id="cd09278">
    <property type="entry name" value="RNase_HI_prokaryote_like"/>
    <property type="match status" value="1"/>
</dbReference>
<dbReference type="FunFam" id="3.30.420.10:FF:000089">
    <property type="entry name" value="Ribonuclease H"/>
    <property type="match status" value="1"/>
</dbReference>
<dbReference type="Gene3D" id="3.30.420.10">
    <property type="entry name" value="Ribonuclease H-like superfamily/Ribonuclease H"/>
    <property type="match status" value="1"/>
</dbReference>
<dbReference type="HAMAP" id="MF_00042">
    <property type="entry name" value="RNase_H"/>
    <property type="match status" value="1"/>
</dbReference>
<dbReference type="InterPro" id="IPR050092">
    <property type="entry name" value="RNase_H"/>
</dbReference>
<dbReference type="InterPro" id="IPR012337">
    <property type="entry name" value="RNaseH-like_sf"/>
</dbReference>
<dbReference type="InterPro" id="IPR002156">
    <property type="entry name" value="RNaseH_domain"/>
</dbReference>
<dbReference type="InterPro" id="IPR036397">
    <property type="entry name" value="RNaseH_sf"/>
</dbReference>
<dbReference type="InterPro" id="IPR022892">
    <property type="entry name" value="RNaseHI"/>
</dbReference>
<dbReference type="NCBIfam" id="NF001236">
    <property type="entry name" value="PRK00203.1"/>
    <property type="match status" value="1"/>
</dbReference>
<dbReference type="PANTHER" id="PTHR10642">
    <property type="entry name" value="RIBONUCLEASE H1"/>
    <property type="match status" value="1"/>
</dbReference>
<dbReference type="PANTHER" id="PTHR10642:SF26">
    <property type="entry name" value="RIBONUCLEASE H1"/>
    <property type="match status" value="1"/>
</dbReference>
<dbReference type="Pfam" id="PF00075">
    <property type="entry name" value="RNase_H"/>
    <property type="match status" value="1"/>
</dbReference>
<dbReference type="SUPFAM" id="SSF53098">
    <property type="entry name" value="Ribonuclease H-like"/>
    <property type="match status" value="1"/>
</dbReference>
<dbReference type="PROSITE" id="PS50879">
    <property type="entry name" value="RNASE_H_1"/>
    <property type="match status" value="1"/>
</dbReference>
<gene>
    <name evidence="1" type="primary">rnhA</name>
    <name type="ordered locus">Rsph17025_0154</name>
</gene>